<proteinExistence type="evidence at transcript level"/>
<comment type="subcellular location">
    <subcellularLocation>
        <location evidence="2">Mitochondrion</location>
    </subcellularLocation>
</comment>
<comment type="similarity">
    <text evidence="2">Belongs to the PPR family. P subfamily.</text>
</comment>
<comment type="sequence caution" evidence="2">
    <conflict type="erroneous initiation">
        <sequence resource="EMBL-CDS" id="AAD22661"/>
    </conflict>
</comment>
<comment type="sequence caution" evidence="2">
    <conflict type="erroneous initiation">
        <sequence resource="EMBL-CDS" id="CAB80692"/>
    </conflict>
</comment>
<comment type="online information" name="Pentatricopeptide repeat proteins">
    <link uri="https://ppr.plantenergy.uwa.edu.au"/>
</comment>
<protein>
    <recommendedName>
        <fullName>Pentatricopeptide repeat-containing protein At4g01990, mitochondrial</fullName>
    </recommendedName>
</protein>
<name>PP300_ARATH</name>
<evidence type="ECO:0000255" key="1"/>
<evidence type="ECO:0000305" key="2"/>
<feature type="transit peptide" description="Mitochondrion" evidence="1">
    <location>
        <begin position="1"/>
        <end position="13"/>
    </location>
</feature>
<feature type="chain" id="PRO_0000363418" description="Pentatricopeptide repeat-containing protein At4g01990, mitochondrial">
    <location>
        <begin position="14"/>
        <end position="502"/>
    </location>
</feature>
<feature type="repeat" description="PPR 1">
    <location>
        <begin position="139"/>
        <end position="173"/>
    </location>
</feature>
<feature type="repeat" description="PPR 2">
    <location>
        <begin position="174"/>
        <end position="208"/>
    </location>
</feature>
<feature type="repeat" description="PPR 3">
    <location>
        <begin position="209"/>
        <end position="243"/>
    </location>
</feature>
<feature type="repeat" description="PPR 4">
    <location>
        <begin position="245"/>
        <end position="275"/>
    </location>
</feature>
<feature type="repeat" description="PPR 5">
    <location>
        <begin position="280"/>
        <end position="310"/>
    </location>
</feature>
<feature type="repeat" description="PPR 6">
    <location>
        <begin position="315"/>
        <end position="345"/>
    </location>
</feature>
<feature type="repeat" description="PPR 7">
    <location>
        <begin position="350"/>
        <end position="381"/>
    </location>
</feature>
<sequence>MMHSVSRLARRFCATLATATAEISGEAAASVPTKAKKHRSIYKKLSSLGTRGGGKMEETLNQFVMEGVPVKKHDLIRYAKDLRKFRQPQRALEIFEWMERKEIAFTGSDHAIRLNLIAKSKGLEAAETYFNSLDDSIKNQSTYGSLLNCYCVEKEEVKAKAHFENMVDLNHVSNSLPFNNLMAMYMGLGQPEKVPALVVAMKEKSITPCDITYSMWIQSCGSLKDLDGVEKVLDEMKAEGEGIFSWNTFANLAAIYIKVGLYGKAEEALKSLENNMNPDVRDCYHFLINLYTGIANASEVYRVWDLLKKRYPNVNNSSYLTMLRALSKLDDIDGVKKVFAEWESTCWTYDMRMANVAISSYLKQNMYEEAEAVFNGAMKKCKGQFSKARQLLMMHLLKNDQADLALKHFEAAVLDQDKNWTWSSELISSFFLHFEEAKDVDGAEEFCKTLTKWSPLSSETYTLLMKTYLAAGKACPDMKKRLEEQGILVDEEQECLLSKICP</sequence>
<keyword id="KW-0496">Mitochondrion</keyword>
<keyword id="KW-1185">Reference proteome</keyword>
<keyword id="KW-0677">Repeat</keyword>
<keyword id="KW-0809">Transit peptide</keyword>
<gene>
    <name type="ordered locus">At4g01990</name>
    <name type="ORF">T7B11.26</name>
</gene>
<accession>Q93WC5</accession>
<accession>Q9SYJ6</accession>
<dbReference type="EMBL" id="AC007138">
    <property type="protein sequence ID" value="AAD22661.1"/>
    <property type="status" value="ALT_INIT"/>
    <property type="molecule type" value="Genomic_DNA"/>
</dbReference>
<dbReference type="EMBL" id="AL161493">
    <property type="protein sequence ID" value="CAB80692.1"/>
    <property type="status" value="ALT_INIT"/>
    <property type="molecule type" value="Genomic_DNA"/>
</dbReference>
<dbReference type="EMBL" id="CP002687">
    <property type="protein sequence ID" value="AEE82108.1"/>
    <property type="molecule type" value="Genomic_DNA"/>
</dbReference>
<dbReference type="EMBL" id="AY039582">
    <property type="protein sequence ID" value="AAK62637.1"/>
    <property type="molecule type" value="mRNA"/>
</dbReference>
<dbReference type="EMBL" id="AY059165">
    <property type="protein sequence ID" value="AAL15390.1"/>
    <property type="molecule type" value="mRNA"/>
</dbReference>
<dbReference type="PIR" id="E85025">
    <property type="entry name" value="E85025"/>
</dbReference>
<dbReference type="RefSeq" id="NP_567220.1">
    <property type="nucleotide sequence ID" value="NM_116430.2"/>
</dbReference>
<dbReference type="SMR" id="Q93WC5"/>
<dbReference type="BioGRID" id="13461">
    <property type="interactions" value="1"/>
</dbReference>
<dbReference type="FunCoup" id="Q93WC5">
    <property type="interactions" value="484"/>
</dbReference>
<dbReference type="IntAct" id="Q93WC5">
    <property type="interactions" value="1"/>
</dbReference>
<dbReference type="iPTMnet" id="Q93WC5"/>
<dbReference type="PaxDb" id="3702-AT4G01990.1"/>
<dbReference type="ProteomicsDB" id="249211"/>
<dbReference type="EnsemblPlants" id="AT4G01990.1">
    <property type="protein sequence ID" value="AT4G01990.1"/>
    <property type="gene ID" value="AT4G01990"/>
</dbReference>
<dbReference type="GeneID" id="828172"/>
<dbReference type="Gramene" id="AT4G01990.1">
    <property type="protein sequence ID" value="AT4G01990.1"/>
    <property type="gene ID" value="AT4G01990"/>
</dbReference>
<dbReference type="KEGG" id="ath:AT4G01990"/>
<dbReference type="Araport" id="AT4G01990"/>
<dbReference type="TAIR" id="AT4G01990"/>
<dbReference type="eggNOG" id="KOG4197">
    <property type="taxonomic scope" value="Eukaryota"/>
</dbReference>
<dbReference type="HOGENOM" id="CLU_019802_3_0_1"/>
<dbReference type="InParanoid" id="Q93WC5"/>
<dbReference type="OMA" id="EWESTCY"/>
<dbReference type="PhylomeDB" id="Q93WC5"/>
<dbReference type="PRO" id="PR:Q93WC5"/>
<dbReference type="Proteomes" id="UP000006548">
    <property type="component" value="Chromosome 4"/>
</dbReference>
<dbReference type="ExpressionAtlas" id="Q93WC5">
    <property type="expression patterns" value="baseline and differential"/>
</dbReference>
<dbReference type="GO" id="GO:0005739">
    <property type="term" value="C:mitochondrion"/>
    <property type="evidence" value="ECO:0007669"/>
    <property type="project" value="UniProtKB-SubCell"/>
</dbReference>
<dbReference type="GO" id="GO:0003729">
    <property type="term" value="F:mRNA binding"/>
    <property type="evidence" value="ECO:0000314"/>
    <property type="project" value="TAIR"/>
</dbReference>
<dbReference type="FunFam" id="1.25.40.10:FF:000385">
    <property type="entry name" value="Pentatricopeptide repeat-containing protein mitochondrial"/>
    <property type="match status" value="1"/>
</dbReference>
<dbReference type="Gene3D" id="1.25.40.10">
    <property type="entry name" value="Tetratricopeptide repeat domain"/>
    <property type="match status" value="3"/>
</dbReference>
<dbReference type="InterPro" id="IPR002885">
    <property type="entry name" value="Pentatricopeptide_rpt"/>
</dbReference>
<dbReference type="InterPro" id="IPR011990">
    <property type="entry name" value="TPR-like_helical_dom_sf"/>
</dbReference>
<dbReference type="NCBIfam" id="TIGR00756">
    <property type="entry name" value="PPR"/>
    <property type="match status" value="1"/>
</dbReference>
<dbReference type="PANTHER" id="PTHR45717">
    <property type="entry name" value="OS12G0527900 PROTEIN"/>
    <property type="match status" value="1"/>
</dbReference>
<dbReference type="PANTHER" id="PTHR45717:SF23">
    <property type="entry name" value="PENTACOTRIPEPTIDE-REPEAT REGION OF PRORP DOMAIN-CONTAINING PROTEIN"/>
    <property type="match status" value="1"/>
</dbReference>
<dbReference type="Pfam" id="PF01535">
    <property type="entry name" value="PPR"/>
    <property type="match status" value="4"/>
</dbReference>
<dbReference type="SUPFAM" id="SSF48452">
    <property type="entry name" value="TPR-like"/>
    <property type="match status" value="2"/>
</dbReference>
<reference key="1">
    <citation type="journal article" date="1999" name="Nature">
        <title>Sequence and analysis of chromosome 4 of the plant Arabidopsis thaliana.</title>
        <authorList>
            <person name="Mayer K.F.X."/>
            <person name="Schueller C."/>
            <person name="Wambutt R."/>
            <person name="Murphy G."/>
            <person name="Volckaert G."/>
            <person name="Pohl T."/>
            <person name="Duesterhoeft A."/>
            <person name="Stiekema W."/>
            <person name="Entian K.-D."/>
            <person name="Terryn N."/>
            <person name="Harris B."/>
            <person name="Ansorge W."/>
            <person name="Brandt P."/>
            <person name="Grivell L.A."/>
            <person name="Rieger M."/>
            <person name="Weichselgartner M."/>
            <person name="de Simone V."/>
            <person name="Obermaier B."/>
            <person name="Mache R."/>
            <person name="Mueller M."/>
            <person name="Kreis M."/>
            <person name="Delseny M."/>
            <person name="Puigdomenech P."/>
            <person name="Watson M."/>
            <person name="Schmidtheini T."/>
            <person name="Reichert B."/>
            <person name="Portetelle D."/>
            <person name="Perez-Alonso M."/>
            <person name="Boutry M."/>
            <person name="Bancroft I."/>
            <person name="Vos P."/>
            <person name="Hoheisel J."/>
            <person name="Zimmermann W."/>
            <person name="Wedler H."/>
            <person name="Ridley P."/>
            <person name="Langham S.-A."/>
            <person name="McCullagh B."/>
            <person name="Bilham L."/>
            <person name="Robben J."/>
            <person name="van der Schueren J."/>
            <person name="Grymonprez B."/>
            <person name="Chuang Y.-J."/>
            <person name="Vandenbussche F."/>
            <person name="Braeken M."/>
            <person name="Weltjens I."/>
            <person name="Voet M."/>
            <person name="Bastiaens I."/>
            <person name="Aert R."/>
            <person name="Defoor E."/>
            <person name="Weitzenegger T."/>
            <person name="Bothe G."/>
            <person name="Ramsperger U."/>
            <person name="Hilbert H."/>
            <person name="Braun M."/>
            <person name="Holzer E."/>
            <person name="Brandt A."/>
            <person name="Peters S."/>
            <person name="van Staveren M."/>
            <person name="Dirkse W."/>
            <person name="Mooijman P."/>
            <person name="Klein Lankhorst R."/>
            <person name="Rose M."/>
            <person name="Hauf J."/>
            <person name="Koetter P."/>
            <person name="Berneiser S."/>
            <person name="Hempel S."/>
            <person name="Feldpausch M."/>
            <person name="Lamberth S."/>
            <person name="Van den Daele H."/>
            <person name="De Keyser A."/>
            <person name="Buysshaert C."/>
            <person name="Gielen J."/>
            <person name="Villarroel R."/>
            <person name="De Clercq R."/>
            <person name="van Montagu M."/>
            <person name="Rogers J."/>
            <person name="Cronin A."/>
            <person name="Quail M.A."/>
            <person name="Bray-Allen S."/>
            <person name="Clark L."/>
            <person name="Doggett J."/>
            <person name="Hall S."/>
            <person name="Kay M."/>
            <person name="Lennard N."/>
            <person name="McLay K."/>
            <person name="Mayes R."/>
            <person name="Pettett A."/>
            <person name="Rajandream M.A."/>
            <person name="Lyne M."/>
            <person name="Benes V."/>
            <person name="Rechmann S."/>
            <person name="Borkova D."/>
            <person name="Bloecker H."/>
            <person name="Scharfe M."/>
            <person name="Grimm M."/>
            <person name="Loehnert T.-H."/>
            <person name="Dose S."/>
            <person name="de Haan M."/>
            <person name="Maarse A.C."/>
            <person name="Schaefer M."/>
            <person name="Mueller-Auer S."/>
            <person name="Gabel C."/>
            <person name="Fuchs M."/>
            <person name="Fartmann B."/>
            <person name="Granderath K."/>
            <person name="Dauner D."/>
            <person name="Herzl A."/>
            <person name="Neumann S."/>
            <person name="Argiriou A."/>
            <person name="Vitale D."/>
            <person name="Liguori R."/>
            <person name="Piravandi E."/>
            <person name="Massenet O."/>
            <person name="Quigley F."/>
            <person name="Clabauld G."/>
            <person name="Muendlein A."/>
            <person name="Felber R."/>
            <person name="Schnabl S."/>
            <person name="Hiller R."/>
            <person name="Schmidt W."/>
            <person name="Lecharny A."/>
            <person name="Aubourg S."/>
            <person name="Chefdor F."/>
            <person name="Cooke R."/>
            <person name="Berger C."/>
            <person name="Monfort A."/>
            <person name="Casacuberta E."/>
            <person name="Gibbons T."/>
            <person name="Weber N."/>
            <person name="Vandenbol M."/>
            <person name="Bargues M."/>
            <person name="Terol J."/>
            <person name="Torres A."/>
            <person name="Perez-Perez A."/>
            <person name="Purnelle B."/>
            <person name="Bent E."/>
            <person name="Johnson S."/>
            <person name="Tacon D."/>
            <person name="Jesse T."/>
            <person name="Heijnen L."/>
            <person name="Schwarz S."/>
            <person name="Scholler P."/>
            <person name="Heber S."/>
            <person name="Francs P."/>
            <person name="Bielke C."/>
            <person name="Frishman D."/>
            <person name="Haase D."/>
            <person name="Lemcke K."/>
            <person name="Mewes H.-W."/>
            <person name="Stocker S."/>
            <person name="Zaccaria P."/>
            <person name="Bevan M."/>
            <person name="Wilson R.K."/>
            <person name="de la Bastide M."/>
            <person name="Habermann K."/>
            <person name="Parnell L."/>
            <person name="Dedhia N."/>
            <person name="Gnoj L."/>
            <person name="Schutz K."/>
            <person name="Huang E."/>
            <person name="Spiegel L."/>
            <person name="Sekhon M."/>
            <person name="Murray J."/>
            <person name="Sheet P."/>
            <person name="Cordes M."/>
            <person name="Abu-Threideh J."/>
            <person name="Stoneking T."/>
            <person name="Kalicki J."/>
            <person name="Graves T."/>
            <person name="Harmon G."/>
            <person name="Edwards J."/>
            <person name="Latreille P."/>
            <person name="Courtney L."/>
            <person name="Cloud J."/>
            <person name="Abbott A."/>
            <person name="Scott K."/>
            <person name="Johnson D."/>
            <person name="Minx P."/>
            <person name="Bentley D."/>
            <person name="Fulton B."/>
            <person name="Miller N."/>
            <person name="Greco T."/>
            <person name="Kemp K."/>
            <person name="Kramer J."/>
            <person name="Fulton L."/>
            <person name="Mardis E."/>
            <person name="Dante M."/>
            <person name="Pepin K."/>
            <person name="Hillier L.W."/>
            <person name="Nelson J."/>
            <person name="Spieth J."/>
            <person name="Ryan E."/>
            <person name="Andrews S."/>
            <person name="Geisel C."/>
            <person name="Layman D."/>
            <person name="Du H."/>
            <person name="Ali J."/>
            <person name="Berghoff A."/>
            <person name="Jones K."/>
            <person name="Drone K."/>
            <person name="Cotton M."/>
            <person name="Joshu C."/>
            <person name="Antonoiu B."/>
            <person name="Zidanic M."/>
            <person name="Strong C."/>
            <person name="Sun H."/>
            <person name="Lamar B."/>
            <person name="Yordan C."/>
            <person name="Ma P."/>
            <person name="Zhong J."/>
            <person name="Preston R."/>
            <person name="Vil D."/>
            <person name="Shekher M."/>
            <person name="Matero A."/>
            <person name="Shah R."/>
            <person name="Swaby I.K."/>
            <person name="O'Shaughnessy A."/>
            <person name="Rodriguez M."/>
            <person name="Hoffman J."/>
            <person name="Till S."/>
            <person name="Granat S."/>
            <person name="Shohdy N."/>
            <person name="Hasegawa A."/>
            <person name="Hameed A."/>
            <person name="Lodhi M."/>
            <person name="Johnson A."/>
            <person name="Chen E."/>
            <person name="Marra M.A."/>
            <person name="Martienssen R."/>
            <person name="McCombie W.R."/>
        </authorList>
    </citation>
    <scope>NUCLEOTIDE SEQUENCE [LARGE SCALE GENOMIC DNA]</scope>
    <source>
        <strain>cv. Columbia</strain>
    </source>
</reference>
<reference key="2">
    <citation type="journal article" date="2017" name="Plant J.">
        <title>Araport11: a complete reannotation of the Arabidopsis thaliana reference genome.</title>
        <authorList>
            <person name="Cheng C.Y."/>
            <person name="Krishnakumar V."/>
            <person name="Chan A.P."/>
            <person name="Thibaud-Nissen F."/>
            <person name="Schobel S."/>
            <person name="Town C.D."/>
        </authorList>
    </citation>
    <scope>GENOME REANNOTATION</scope>
    <source>
        <strain>cv. Columbia</strain>
    </source>
</reference>
<reference key="3">
    <citation type="journal article" date="2003" name="Science">
        <title>Empirical analysis of transcriptional activity in the Arabidopsis genome.</title>
        <authorList>
            <person name="Yamada K."/>
            <person name="Lim J."/>
            <person name="Dale J.M."/>
            <person name="Chen H."/>
            <person name="Shinn P."/>
            <person name="Palm C.J."/>
            <person name="Southwick A.M."/>
            <person name="Wu H.C."/>
            <person name="Kim C.J."/>
            <person name="Nguyen M."/>
            <person name="Pham P.K."/>
            <person name="Cheuk R.F."/>
            <person name="Karlin-Newmann G."/>
            <person name="Liu S.X."/>
            <person name="Lam B."/>
            <person name="Sakano H."/>
            <person name="Wu T."/>
            <person name="Yu G."/>
            <person name="Miranda M."/>
            <person name="Quach H.L."/>
            <person name="Tripp M."/>
            <person name="Chang C.H."/>
            <person name="Lee J.M."/>
            <person name="Toriumi M.J."/>
            <person name="Chan M.M."/>
            <person name="Tang C.C."/>
            <person name="Onodera C.S."/>
            <person name="Deng J.M."/>
            <person name="Akiyama K."/>
            <person name="Ansari Y."/>
            <person name="Arakawa T."/>
            <person name="Banh J."/>
            <person name="Banno F."/>
            <person name="Bowser L."/>
            <person name="Brooks S.Y."/>
            <person name="Carninci P."/>
            <person name="Chao Q."/>
            <person name="Choy N."/>
            <person name="Enju A."/>
            <person name="Goldsmith A.D."/>
            <person name="Gurjal M."/>
            <person name="Hansen N.F."/>
            <person name="Hayashizaki Y."/>
            <person name="Johnson-Hopson C."/>
            <person name="Hsuan V.W."/>
            <person name="Iida K."/>
            <person name="Karnes M."/>
            <person name="Khan S."/>
            <person name="Koesema E."/>
            <person name="Ishida J."/>
            <person name="Jiang P.X."/>
            <person name="Jones T."/>
            <person name="Kawai J."/>
            <person name="Kamiya A."/>
            <person name="Meyers C."/>
            <person name="Nakajima M."/>
            <person name="Narusaka M."/>
            <person name="Seki M."/>
            <person name="Sakurai T."/>
            <person name="Satou M."/>
            <person name="Tamse R."/>
            <person name="Vaysberg M."/>
            <person name="Wallender E.K."/>
            <person name="Wong C."/>
            <person name="Yamamura Y."/>
            <person name="Yuan S."/>
            <person name="Shinozaki K."/>
            <person name="Davis R.W."/>
            <person name="Theologis A."/>
            <person name="Ecker J.R."/>
        </authorList>
    </citation>
    <scope>NUCLEOTIDE SEQUENCE [LARGE SCALE MRNA]</scope>
    <source>
        <strain>cv. Columbia</strain>
    </source>
</reference>
<reference key="4">
    <citation type="journal article" date="2004" name="Plant Cell">
        <title>Genome-wide analysis of Arabidopsis pentatricopeptide repeat proteins reveals their essential role in organelle biogenesis.</title>
        <authorList>
            <person name="Lurin C."/>
            <person name="Andres C."/>
            <person name="Aubourg S."/>
            <person name="Bellaoui M."/>
            <person name="Bitton F."/>
            <person name="Bruyere C."/>
            <person name="Caboche M."/>
            <person name="Debast C."/>
            <person name="Gualberto J."/>
            <person name="Hoffmann B."/>
            <person name="Lecharny A."/>
            <person name="Le Ret M."/>
            <person name="Martin-Magniette M.-L."/>
            <person name="Mireau H."/>
            <person name="Peeters N."/>
            <person name="Renou J.-P."/>
            <person name="Szurek B."/>
            <person name="Taconnat L."/>
            <person name="Small I."/>
        </authorList>
    </citation>
    <scope>GENE FAMILY</scope>
</reference>
<organism>
    <name type="scientific">Arabidopsis thaliana</name>
    <name type="common">Mouse-ear cress</name>
    <dbReference type="NCBI Taxonomy" id="3702"/>
    <lineage>
        <taxon>Eukaryota</taxon>
        <taxon>Viridiplantae</taxon>
        <taxon>Streptophyta</taxon>
        <taxon>Embryophyta</taxon>
        <taxon>Tracheophyta</taxon>
        <taxon>Spermatophyta</taxon>
        <taxon>Magnoliopsida</taxon>
        <taxon>eudicotyledons</taxon>
        <taxon>Gunneridae</taxon>
        <taxon>Pentapetalae</taxon>
        <taxon>rosids</taxon>
        <taxon>malvids</taxon>
        <taxon>Brassicales</taxon>
        <taxon>Brassicaceae</taxon>
        <taxon>Camelineae</taxon>
        <taxon>Arabidopsis</taxon>
    </lineage>
</organism>